<sequence>MLGDTEVLANLRVLQTELTGAGILEPLLSADGTTDVLVTAPDSVWVDDGNGLRRSQIRFADESAVRRLAQRLALAAGRRLDDAQPWVDGQLTGIGVGGFAVRLHAVLPPVATQGTCLSLRVLRPATQDLAALAAAGAIDPAAAALVADIVTARLAFLVCGGTGAGKTTLLAAMLGAVSPDERIVCVEDAAELAPRHPHLVKLVARRANVEGIGEVTVRQLVRQALRMRPDRIVVGEVRGAEVVDLLAALNTGHEGGAGTVHANNPGEVPARMEALGALGGLDRAALHSQLAAAVQVLLHVARDRAGRRRLAEIAVLRQAEGRVQAVTVWHADRGMSDDAAALHDLLRSRASA</sequence>
<organism>
    <name type="scientific">Mycobacterium tuberculosis (strain CDC 1551 / Oshkosh)</name>
    <dbReference type="NCBI Taxonomy" id="83331"/>
    <lineage>
        <taxon>Bacteria</taxon>
        <taxon>Bacillati</taxon>
        <taxon>Actinomycetota</taxon>
        <taxon>Actinomycetes</taxon>
        <taxon>Mycobacteriales</taxon>
        <taxon>Mycobacteriaceae</taxon>
        <taxon>Mycobacterium</taxon>
        <taxon>Mycobacterium tuberculosis complex</taxon>
    </lineage>
</organism>
<reference key="1">
    <citation type="journal article" date="2002" name="J. Bacteriol.">
        <title>Whole-genome comparison of Mycobacterium tuberculosis clinical and laboratory strains.</title>
        <authorList>
            <person name="Fleischmann R.D."/>
            <person name="Alland D."/>
            <person name="Eisen J.A."/>
            <person name="Carpenter L."/>
            <person name="White O."/>
            <person name="Peterson J.D."/>
            <person name="DeBoy R.T."/>
            <person name="Dodson R.J."/>
            <person name="Gwinn M.L."/>
            <person name="Haft D.H."/>
            <person name="Hickey E.K."/>
            <person name="Kolonay J.F."/>
            <person name="Nelson W.C."/>
            <person name="Umayam L.A."/>
            <person name="Ermolaeva M.D."/>
            <person name="Salzberg S.L."/>
            <person name="Delcher A."/>
            <person name="Utterback T.R."/>
            <person name="Weidman J.F."/>
            <person name="Khouri H.M."/>
            <person name="Gill J."/>
            <person name="Mikula A."/>
            <person name="Bishai W."/>
            <person name="Jacobs W.R. Jr."/>
            <person name="Venter J.C."/>
            <person name="Fraser C.M."/>
        </authorList>
    </citation>
    <scope>NUCLEOTIDE SEQUENCE [LARGE SCALE GENOMIC DNA]</scope>
    <source>
        <strain>CDC 1551 / Oshkosh</strain>
    </source>
</reference>
<proteinExistence type="inferred from homology"/>
<evidence type="ECO:0000255" key="1"/>
<evidence type="ECO:0000305" key="2"/>
<feature type="chain" id="PRO_0000427247" description="Putative conjugal transfer protein MT3759">
    <location>
        <begin position="1"/>
        <end position="352"/>
    </location>
</feature>
<feature type="binding site" evidence="1">
    <location>
        <begin position="160"/>
        <end position="167"/>
    </location>
    <ligand>
        <name>ATP</name>
        <dbReference type="ChEBI" id="CHEBI:30616"/>
    </ligand>
</feature>
<comment type="subcellular location">
    <subcellularLocation>
        <location evidence="2">Cytoplasm</location>
    </subcellularLocation>
</comment>
<comment type="similarity">
    <text evidence="2">Belongs to the GSP E family.</text>
</comment>
<protein>
    <recommendedName>
        <fullName>Putative conjugal transfer protein MT3759</fullName>
    </recommendedName>
</protein>
<keyword id="KW-0067">ATP-binding</keyword>
<keyword id="KW-0184">Conjugation</keyword>
<keyword id="KW-0963">Cytoplasm</keyword>
<keyword id="KW-0547">Nucleotide-binding</keyword>
<keyword id="KW-0614">Plasmid</keyword>
<keyword id="KW-1185">Reference proteome</keyword>
<keyword id="KW-0813">Transport</keyword>
<dbReference type="EMBL" id="AE000516">
    <property type="protein sequence ID" value="AAK48123.1"/>
    <property type="molecule type" value="Genomic_DNA"/>
</dbReference>
<dbReference type="PIR" id="D70788">
    <property type="entry name" value="D70788"/>
</dbReference>
<dbReference type="SMR" id="P9WMT2"/>
<dbReference type="KEGG" id="mtc:MT3759"/>
<dbReference type="HOGENOM" id="CLU_005379_8_0_11"/>
<dbReference type="Proteomes" id="UP000001020">
    <property type="component" value="Chromosome"/>
</dbReference>
<dbReference type="GO" id="GO:0005737">
    <property type="term" value="C:cytoplasm"/>
    <property type="evidence" value="ECO:0007669"/>
    <property type="project" value="UniProtKB-SubCell"/>
</dbReference>
<dbReference type="GO" id="GO:0005524">
    <property type="term" value="F:ATP binding"/>
    <property type="evidence" value="ECO:0007669"/>
    <property type="project" value="UniProtKB-KW"/>
</dbReference>
<dbReference type="GO" id="GO:0016887">
    <property type="term" value="F:ATP hydrolysis activity"/>
    <property type="evidence" value="ECO:0007669"/>
    <property type="project" value="InterPro"/>
</dbReference>
<dbReference type="CDD" id="cd01130">
    <property type="entry name" value="VirB11-like_ATPase"/>
    <property type="match status" value="1"/>
</dbReference>
<dbReference type="FunFam" id="3.30.450.380:FF:000002">
    <property type="entry name" value="Secretion protein, partial"/>
    <property type="match status" value="1"/>
</dbReference>
<dbReference type="FunFam" id="3.40.50.300:FF:001596">
    <property type="entry name" value="Secretion protein, partial"/>
    <property type="match status" value="1"/>
</dbReference>
<dbReference type="Gene3D" id="3.30.450.380">
    <property type="match status" value="1"/>
</dbReference>
<dbReference type="Gene3D" id="3.40.50.300">
    <property type="entry name" value="P-loop containing nucleotide triphosphate hydrolases"/>
    <property type="match status" value="1"/>
</dbReference>
<dbReference type="InterPro" id="IPR027417">
    <property type="entry name" value="P-loop_NTPase"/>
</dbReference>
<dbReference type="InterPro" id="IPR001482">
    <property type="entry name" value="T2SS/T4SS_dom"/>
</dbReference>
<dbReference type="InterPro" id="IPR050921">
    <property type="entry name" value="T4SS_GSP_E_ATPase"/>
</dbReference>
<dbReference type="InterPro" id="IPR022399">
    <property type="entry name" value="TadA-like_ATPase"/>
</dbReference>
<dbReference type="NCBIfam" id="TIGR03819">
    <property type="entry name" value="heli_sec_ATPase"/>
    <property type="match status" value="1"/>
</dbReference>
<dbReference type="PANTHER" id="PTHR30486">
    <property type="entry name" value="TWITCHING MOTILITY PROTEIN PILT"/>
    <property type="match status" value="1"/>
</dbReference>
<dbReference type="PANTHER" id="PTHR30486:SF6">
    <property type="entry name" value="TYPE IV PILUS RETRACTATION ATPASE PILT"/>
    <property type="match status" value="1"/>
</dbReference>
<dbReference type="Pfam" id="PF00437">
    <property type="entry name" value="T2SSE"/>
    <property type="match status" value="1"/>
</dbReference>
<dbReference type="SUPFAM" id="SSF52540">
    <property type="entry name" value="P-loop containing nucleoside triphosphate hydrolases"/>
    <property type="match status" value="1"/>
</dbReference>
<name>Y3659_MYCTO</name>
<accession>P9WMT2</accession>
<accession>L0TEU9</accession>
<accession>Q6MWU9</accession>
<accession>Q7D547</accession>
<gene>
    <name type="ordered locus">MT3759</name>
</gene>